<keyword id="KW-0067">ATP-binding</keyword>
<keyword id="KW-0997">Cell inner membrane</keyword>
<keyword id="KW-1003">Cell membrane</keyword>
<keyword id="KW-0472">Membrane</keyword>
<keyword id="KW-0547">Nucleotide-binding</keyword>
<keyword id="KW-0592">Phosphate transport</keyword>
<keyword id="KW-1278">Translocase</keyword>
<keyword id="KW-0813">Transport</keyword>
<name>PSTB_ENTCL</name>
<reference key="1">
    <citation type="journal article" date="1997" name="J. Bacteriol.">
        <title>Isolation and characterization of Enterobacter cloacae mutants which are defective in chemotaxis toward inorganic phosphate.</title>
        <authorList>
            <person name="Kusaka K."/>
            <person name="Shibata K."/>
            <person name="Kuroda A."/>
            <person name="Kato J."/>
            <person name="Ohtake H."/>
        </authorList>
    </citation>
    <scope>NUCLEOTIDE SEQUENCE [GENOMIC DNA]</scope>
    <source>
        <strain>ATCC 7256 / NBRC 3320</strain>
    </source>
</reference>
<proteinExistence type="inferred from homology"/>
<accession>O32487</accession>
<evidence type="ECO:0000255" key="1">
    <source>
        <dbReference type="HAMAP-Rule" id="MF_01702"/>
    </source>
</evidence>
<protein>
    <recommendedName>
        <fullName evidence="1">Phosphate import ATP-binding protein PstB</fullName>
        <ecNumber evidence="1">7.3.2.1</ecNumber>
    </recommendedName>
    <alternativeName>
        <fullName evidence="1">ABC phosphate transporter</fullName>
    </alternativeName>
    <alternativeName>
        <fullName>Peripheral membrane protein B</fullName>
    </alternativeName>
    <alternativeName>
        <fullName evidence="1">Phosphate-transporting ATPase</fullName>
    </alternativeName>
</protein>
<organism>
    <name type="scientific">Enterobacter cloacae</name>
    <dbReference type="NCBI Taxonomy" id="550"/>
    <lineage>
        <taxon>Bacteria</taxon>
        <taxon>Pseudomonadati</taxon>
        <taxon>Pseudomonadota</taxon>
        <taxon>Gammaproteobacteria</taxon>
        <taxon>Enterobacterales</taxon>
        <taxon>Enterobacteriaceae</taxon>
        <taxon>Enterobacter</taxon>
        <taxon>Enterobacter cloacae complex</taxon>
    </lineage>
</organism>
<dbReference type="EC" id="7.3.2.1" evidence="1"/>
<dbReference type="EMBL" id="D89963">
    <property type="protein sequence ID" value="BAA22864.1"/>
    <property type="molecule type" value="Genomic_DNA"/>
</dbReference>
<dbReference type="RefSeq" id="WP_010426574.1">
    <property type="nucleotide sequence ID" value="NZ_PXJT01000012.1"/>
</dbReference>
<dbReference type="SMR" id="O32487"/>
<dbReference type="GeneID" id="93247878"/>
<dbReference type="eggNOG" id="COG1117">
    <property type="taxonomic scope" value="Bacteria"/>
</dbReference>
<dbReference type="GO" id="GO:0005886">
    <property type="term" value="C:plasma membrane"/>
    <property type="evidence" value="ECO:0007669"/>
    <property type="project" value="UniProtKB-SubCell"/>
</dbReference>
<dbReference type="GO" id="GO:0005524">
    <property type="term" value="F:ATP binding"/>
    <property type="evidence" value="ECO:0007669"/>
    <property type="project" value="UniProtKB-KW"/>
</dbReference>
<dbReference type="GO" id="GO:0016887">
    <property type="term" value="F:ATP hydrolysis activity"/>
    <property type="evidence" value="ECO:0007669"/>
    <property type="project" value="InterPro"/>
</dbReference>
<dbReference type="GO" id="GO:0015415">
    <property type="term" value="F:ATPase-coupled phosphate ion transmembrane transporter activity"/>
    <property type="evidence" value="ECO:0007669"/>
    <property type="project" value="UniProtKB-EC"/>
</dbReference>
<dbReference type="GO" id="GO:0035435">
    <property type="term" value="P:phosphate ion transmembrane transport"/>
    <property type="evidence" value="ECO:0007669"/>
    <property type="project" value="InterPro"/>
</dbReference>
<dbReference type="CDD" id="cd03260">
    <property type="entry name" value="ABC_PstB_phosphate_transporter"/>
    <property type="match status" value="1"/>
</dbReference>
<dbReference type="FunFam" id="3.40.50.300:FF:000132">
    <property type="entry name" value="Phosphate import ATP-binding protein PstB"/>
    <property type="match status" value="1"/>
</dbReference>
<dbReference type="Gene3D" id="3.40.50.300">
    <property type="entry name" value="P-loop containing nucleotide triphosphate hydrolases"/>
    <property type="match status" value="1"/>
</dbReference>
<dbReference type="InterPro" id="IPR003593">
    <property type="entry name" value="AAA+_ATPase"/>
</dbReference>
<dbReference type="InterPro" id="IPR003439">
    <property type="entry name" value="ABC_transporter-like_ATP-bd"/>
</dbReference>
<dbReference type="InterPro" id="IPR017871">
    <property type="entry name" value="ABC_transporter-like_CS"/>
</dbReference>
<dbReference type="InterPro" id="IPR027417">
    <property type="entry name" value="P-loop_NTPase"/>
</dbReference>
<dbReference type="InterPro" id="IPR005670">
    <property type="entry name" value="PstB-like"/>
</dbReference>
<dbReference type="NCBIfam" id="TIGR00972">
    <property type="entry name" value="3a0107s01c2"/>
    <property type="match status" value="1"/>
</dbReference>
<dbReference type="PANTHER" id="PTHR43423">
    <property type="entry name" value="ABC TRANSPORTER I FAMILY MEMBER 17"/>
    <property type="match status" value="1"/>
</dbReference>
<dbReference type="PANTHER" id="PTHR43423:SF3">
    <property type="entry name" value="PHOSPHATE IMPORT ATP-BINDING PROTEIN PSTB"/>
    <property type="match status" value="1"/>
</dbReference>
<dbReference type="Pfam" id="PF00005">
    <property type="entry name" value="ABC_tran"/>
    <property type="match status" value="1"/>
</dbReference>
<dbReference type="SMART" id="SM00382">
    <property type="entry name" value="AAA"/>
    <property type="match status" value="1"/>
</dbReference>
<dbReference type="SUPFAM" id="SSF52540">
    <property type="entry name" value="P-loop containing nucleoside triphosphate hydrolases"/>
    <property type="match status" value="1"/>
</dbReference>
<dbReference type="PROSITE" id="PS00211">
    <property type="entry name" value="ABC_TRANSPORTER_1"/>
    <property type="match status" value="1"/>
</dbReference>
<dbReference type="PROSITE" id="PS50893">
    <property type="entry name" value="ABC_TRANSPORTER_2"/>
    <property type="match status" value="1"/>
</dbReference>
<dbReference type="PROSITE" id="PS51238">
    <property type="entry name" value="PSTB"/>
    <property type="match status" value="1"/>
</dbReference>
<comment type="function">
    <text>Part of the ABC transporter complex PstSACB involved in phosphate import. Responsible for energy coupling to the transport system.</text>
</comment>
<comment type="catalytic activity">
    <reaction evidence="1">
        <text>phosphate(out) + ATP + H2O = ADP + 2 phosphate(in) + H(+)</text>
        <dbReference type="Rhea" id="RHEA:24440"/>
        <dbReference type="ChEBI" id="CHEBI:15377"/>
        <dbReference type="ChEBI" id="CHEBI:15378"/>
        <dbReference type="ChEBI" id="CHEBI:30616"/>
        <dbReference type="ChEBI" id="CHEBI:43474"/>
        <dbReference type="ChEBI" id="CHEBI:456216"/>
        <dbReference type="EC" id="7.3.2.1"/>
    </reaction>
</comment>
<comment type="subunit">
    <text evidence="1">The complex is composed of two ATP-binding proteins (PstB), two transmembrane proteins (PstC and PstA) and a solute-binding protein (PstS).</text>
</comment>
<comment type="subcellular location">
    <subcellularLocation>
        <location evidence="1">Cell inner membrane</location>
        <topology evidence="1">Peripheral membrane protein</topology>
    </subcellularLocation>
</comment>
<comment type="similarity">
    <text evidence="1">Belongs to the ABC transporter superfamily. Phosphate importer (TC 3.A.1.7) family.</text>
</comment>
<feature type="chain" id="PRO_0000092814" description="Phosphate import ATP-binding protein PstB">
    <location>
        <begin position="1"/>
        <end position="257"/>
    </location>
</feature>
<feature type="domain" description="ABC transporter" evidence="1">
    <location>
        <begin position="11"/>
        <end position="252"/>
    </location>
</feature>
<feature type="binding site" evidence="1">
    <location>
        <begin position="43"/>
        <end position="50"/>
    </location>
    <ligand>
        <name>ATP</name>
        <dbReference type="ChEBI" id="CHEBI:30616"/>
    </ligand>
</feature>
<sequence>MSMVDTAPGKIQVRDLNFYYGKFHALKNINLDIAKNQVTAFIGPSGCGKSTLLRTFNKMYSLYPEQRAEGEIILDGENILTQAQDIALLRAKVGMVFQKPTPFPMSIYDNIAFGVRLFEKLSRADMDERVQWALTKAALWNETKDKLHQSGYSLSGGQQQRLCIARGIAIRPEVLLLDEPCSALDPISTGRIEELITELKQDYTVVIVTHNMQQAARCSDHTAFMYLGELIEFSDTDALFTRPAKKQTEDYITGRYG</sequence>
<gene>
    <name evidence="1" type="primary">pstB</name>
</gene>